<dbReference type="PIR" id="A41270">
    <property type="entry name" value="A41270"/>
</dbReference>
<dbReference type="SMR" id="P30259"/>
<dbReference type="GO" id="GO:0000786">
    <property type="term" value="C:nucleosome"/>
    <property type="evidence" value="ECO:0007669"/>
    <property type="project" value="UniProtKB-KW"/>
</dbReference>
<dbReference type="GO" id="GO:0005634">
    <property type="term" value="C:nucleus"/>
    <property type="evidence" value="ECO:0007669"/>
    <property type="project" value="UniProtKB-SubCell"/>
</dbReference>
<dbReference type="GO" id="GO:0003677">
    <property type="term" value="F:DNA binding"/>
    <property type="evidence" value="ECO:0007669"/>
    <property type="project" value="UniProtKB-KW"/>
</dbReference>
<dbReference type="GO" id="GO:0030154">
    <property type="term" value="P:cell differentiation"/>
    <property type="evidence" value="ECO:0007669"/>
    <property type="project" value="UniProtKB-KW"/>
</dbReference>
<dbReference type="GO" id="GO:0030261">
    <property type="term" value="P:chromosome condensation"/>
    <property type="evidence" value="ECO:0007669"/>
    <property type="project" value="UniProtKB-KW"/>
</dbReference>
<dbReference type="GO" id="GO:0007283">
    <property type="term" value="P:spermatogenesis"/>
    <property type="evidence" value="ECO:0007669"/>
    <property type="project" value="UniProtKB-KW"/>
</dbReference>
<reference key="1">
    <citation type="journal article" date="1984" name="Biochim. Biophys. Acta">
        <title>Primary structure of scylliorhinine S4, a protamine isolated from sperm nuclei of the dog-fish Scylliorhinus caniculus.</title>
        <authorList>
            <person name="Sautiere P."/>
            <person name="Gusse M."/>
            <person name="Briand G."/>
            <person name="Martinage A."/>
            <person name="Chevaillier P."/>
        </authorList>
    </citation>
    <scope>PROTEIN SEQUENCE</scope>
    <source>
        <tissue>Testis</tissue>
    </source>
</reference>
<reference key="2">
    <citation type="journal article" date="1983" name="Biochim. Biophys. Acta">
        <title>Extraction, purification and characterization of the sperm protamines of the dog-fish Scylliorhinus caniculus.</title>
        <authorList>
            <person name="Gusse M."/>
            <person name="Sautiere P."/>
            <person name="Chauviere M."/>
            <person name="Chevaillier P."/>
        </authorList>
    </citation>
    <scope>PROTEIN SEQUENCE OF 1-5</scope>
</reference>
<comment type="function">
    <text>Protamines substitute for histones in the chromatin of sperm during the haploid phase of spermatogenesis. They compact sperm DNA into a highly condensed, stable and inactive complex.</text>
</comment>
<comment type="subcellular location">
    <subcellularLocation>
        <location>Nucleus</location>
    </subcellularLocation>
    <subcellularLocation>
        <location>Chromosome</location>
    </subcellularLocation>
</comment>
<comment type="tissue specificity">
    <text>Testis.</text>
</comment>
<proteinExistence type="evidence at protein level"/>
<keyword id="KW-0158">Chromosome</keyword>
<keyword id="KW-0217">Developmental protein</keyword>
<keyword id="KW-0221">Differentiation</keyword>
<keyword id="KW-0903">Direct protein sequencing</keyword>
<keyword id="KW-0226">DNA condensation</keyword>
<keyword id="KW-0238">DNA-binding</keyword>
<keyword id="KW-0544">Nucleosome core</keyword>
<keyword id="KW-0539">Nucleus</keyword>
<keyword id="KW-0744">Spermatogenesis</keyword>
<organism>
    <name type="scientific">Scyliorhinus canicula</name>
    <name type="common">Small-spotted catshark</name>
    <name type="synonym">Squalus canicula</name>
    <dbReference type="NCBI Taxonomy" id="7830"/>
    <lineage>
        <taxon>Eukaryota</taxon>
        <taxon>Metazoa</taxon>
        <taxon>Chordata</taxon>
        <taxon>Craniata</taxon>
        <taxon>Vertebrata</taxon>
        <taxon>Chondrichthyes</taxon>
        <taxon>Elasmobranchii</taxon>
        <taxon>Galeomorphii</taxon>
        <taxon>Galeoidea</taxon>
        <taxon>Carcharhiniformes</taxon>
        <taxon>Scyliorhinidae</taxon>
        <taxon>Scyliorhinus</taxon>
    </lineage>
</organism>
<evidence type="ECO:0000256" key="1">
    <source>
        <dbReference type="SAM" id="MobiDB-lite"/>
    </source>
</evidence>
<name>PRTS4_SCYCA</name>
<sequence length="32" mass="3882">GCKKRKARKRPKCKKARKRPKCKRRKVAKKKC</sequence>
<feature type="peptide" id="PRO_0000044851" description="Protamine S4">
    <location>
        <begin position="1"/>
        <end position="32"/>
    </location>
</feature>
<feature type="region of interest" description="Disordered" evidence="1">
    <location>
        <begin position="1"/>
        <end position="32"/>
    </location>
</feature>
<protein>
    <recommendedName>
        <fullName>Protamine S4</fullName>
    </recommendedName>
</protein>
<accession>P30259</accession>